<keyword id="KW-1185">Reference proteome</keyword>
<gene>
    <name type="primary">AC41</name>
    <name type="ORF">ORF41</name>
</gene>
<dbReference type="EMBL" id="L22858">
    <property type="protein sequence ID" value="AAA66671.1"/>
    <property type="molecule type" value="Genomic_DNA"/>
</dbReference>
<dbReference type="PIR" id="A72855">
    <property type="entry name" value="A72855"/>
</dbReference>
<dbReference type="KEGG" id="vg:1403873"/>
<dbReference type="OrthoDB" id="11297at10239"/>
<dbReference type="Proteomes" id="UP000008292">
    <property type="component" value="Segment"/>
</dbReference>
<dbReference type="InterPro" id="IPR009365">
    <property type="entry name" value="Nucleo_LEF-12"/>
</dbReference>
<dbReference type="Pfam" id="PF06256">
    <property type="entry name" value="Nucleo_LEF-12"/>
    <property type="match status" value="1"/>
</dbReference>
<reference key="1">
    <citation type="journal article" date="1994" name="Virology">
        <title>The complete DNA sequence of Autographa californica nuclear polyhedrosis virus.</title>
        <authorList>
            <person name="Ayres M.D."/>
            <person name="Howard S.C."/>
            <person name="Kuzio J."/>
            <person name="Lopez-Ferber M."/>
            <person name="Possee R.D."/>
        </authorList>
    </citation>
    <scope>NUCLEOTIDE SEQUENCE [LARGE SCALE GENOMIC DNA]</scope>
    <source>
        <strain>C6</strain>
    </source>
</reference>
<reference key="2">
    <citation type="journal article" date="1999" name="Virology">
        <title>Identification of additional genes that influence baculovirus late gene expression.</title>
        <authorList>
            <person name="Li L."/>
            <person name="Harwood S.H."/>
            <person name="Rohrmann G.F."/>
        </authorList>
    </citation>
    <scope>FUNCTION</scope>
</reference>
<organism>
    <name type="scientific">Autographa californica nuclear polyhedrosis virus</name>
    <name type="common">AcMNPV</name>
    <dbReference type="NCBI Taxonomy" id="46015"/>
    <lineage>
        <taxon>Viruses</taxon>
        <taxon>Viruses incertae sedis</taxon>
        <taxon>Naldaviricetes</taxon>
        <taxon>Lefavirales</taxon>
        <taxon>Baculoviridae</taxon>
        <taxon>Alphabaculovirus</taxon>
        <taxon>Alphabaculovirus aucalifornicae</taxon>
    </lineage>
</organism>
<name>AC41_NPVAC</name>
<organismHost>
    <name type="scientific">Lepidoptera</name>
    <name type="common">butterflies and moths</name>
    <dbReference type="NCBI Taxonomy" id="7088"/>
</organismHost>
<feature type="chain" id="PRO_0000132977" description="Protein AC41">
    <location>
        <begin position="1"/>
        <end position="181"/>
    </location>
</feature>
<evidence type="ECO:0000269" key="1">
    <source>
    </source>
</evidence>
<protein>
    <recommendedName>
        <fullName>Protein AC41</fullName>
    </recommendedName>
</protein>
<comment type="function">
    <text evidence="1">Plays a role in late gene expression.</text>
</comment>
<accession>P41446</accession>
<sequence length="181" mass="21058">MTMENNAEFNRRLEYVGTIATMMKRTLNVLRQQGYCTQQDADSLCVSDDTAAWLCGRLPTCNFVSFRVHIDQFEHPNPALEYFKFEESLAQRQHVGPRYTYMNYTLFKNVVALKLVVYTRTLQANMYADGLPYFVQNFSETSYKHVRVYVRKLGAIQVATLSVYEQIIEDTINELVVNHVD</sequence>
<proteinExistence type="predicted"/>